<sequence>FHGGSWYRFPWGY</sequence>
<organism>
    <name type="scientific">Conus monile</name>
    <name type="common">Necklace cone</name>
    <dbReference type="NCBI Taxonomy" id="351660"/>
    <lineage>
        <taxon>Eukaryota</taxon>
        <taxon>Metazoa</taxon>
        <taxon>Spiralia</taxon>
        <taxon>Lophotrochozoa</taxon>
        <taxon>Mollusca</taxon>
        <taxon>Gastropoda</taxon>
        <taxon>Caenogastropoda</taxon>
        <taxon>Neogastropoda</taxon>
        <taxon>Conoidea</taxon>
        <taxon>Conidae</taxon>
        <taxon>Conus</taxon>
        <taxon>Strategoconus</taxon>
    </lineage>
</organism>
<proteinExistence type="evidence at protein level"/>
<protein>
    <recommendedName>
        <fullName>Kappa-conotoxin Mo1659</fullName>
    </recommendedName>
</protein>
<name>CMO1_CONMO</name>
<dbReference type="GO" id="GO:0005576">
    <property type="term" value="C:extracellular region"/>
    <property type="evidence" value="ECO:0000314"/>
    <property type="project" value="UniProtKB"/>
</dbReference>
<dbReference type="GO" id="GO:0019870">
    <property type="term" value="F:potassium channel inhibitor activity"/>
    <property type="evidence" value="ECO:0000314"/>
    <property type="project" value="UniProtKB"/>
</dbReference>
<dbReference type="GO" id="GO:0090729">
    <property type="term" value="F:toxin activity"/>
    <property type="evidence" value="ECO:0000314"/>
    <property type="project" value="UniProtKB"/>
</dbReference>
<dbReference type="GO" id="GO:0044562">
    <property type="term" value="P:envenomation resulting in negative regulation of voltage-gated potassium channel activity in another organism"/>
    <property type="evidence" value="ECO:0000314"/>
    <property type="project" value="UniProtKB"/>
</dbReference>
<accession>P84713</accession>
<keyword id="KW-0027">Amidation</keyword>
<keyword id="KW-0903">Direct protein sequencing</keyword>
<keyword id="KW-0872">Ion channel impairing toxin</keyword>
<keyword id="KW-0528">Neurotoxin</keyword>
<keyword id="KW-0632">Potassium channel impairing toxin</keyword>
<keyword id="KW-0964">Secreted</keyword>
<keyword id="KW-0800">Toxin</keyword>
<comment type="function">
    <text evidence="1">Inhibits non-inactivating voltage-gated potassium channels in rat dorsal root ganglion neurons.</text>
</comment>
<comment type="subcellular location">
    <subcellularLocation>
        <location evidence="1">Secreted</location>
    </subcellularLocation>
</comment>
<comment type="tissue specificity">
    <text evidence="1">Expressed by the venom duct.</text>
</comment>
<comment type="mass spectrometry"/>
<comment type="miscellaneous">
    <text>The mature peptide does not contain cysteine residue.</text>
</comment>
<feature type="peptide" id="PRO_0000044884" description="Kappa-conotoxin Mo1659">
    <location>
        <begin position="1"/>
        <end position="13"/>
    </location>
</feature>
<feature type="modified residue" description="Tyrosine amide" evidence="1">
    <location>
        <position position="13"/>
    </location>
</feature>
<evidence type="ECO:0000269" key="1">
    <source>
    </source>
</evidence>
<evidence type="ECO:0000305" key="2"/>
<reference evidence="2" key="1">
    <citation type="journal article" date="2004" name="Biochem. Biophys. Res. Commun.">
        <title>A novel 13 residue acyclic peptide from the marine snail, Conus monile, targets potassium channels.</title>
        <authorList>
            <person name="Sudarslal S."/>
            <person name="Singaravadivelan G."/>
            <person name="Ramasamy P."/>
            <person name="Ananda K."/>
            <person name="Sarma S.P."/>
            <person name="Sikdar S.K."/>
            <person name="Krishnan K.S."/>
            <person name="Balaram P."/>
        </authorList>
    </citation>
    <scope>PROTEIN SEQUENCE</scope>
    <scope>FUNCTION</scope>
    <scope>SUBCELLULAR LOCATION</scope>
    <scope>TISSUE SPECIFICITY</scope>
    <scope>MASS SPECTROMETRY</scope>
    <scope>AMIDATION AT TYR-13</scope>
    <source>
        <tissue evidence="1">Venom</tissue>
    </source>
</reference>